<reference key="1">
    <citation type="journal article" date="2007" name="Nat. Biotechnol.">
        <title>Genome sequence of the lignocellulose-bioconverting and xylose-fermenting yeast Pichia stipitis.</title>
        <authorList>
            <person name="Jeffries T.W."/>
            <person name="Grigoriev I.V."/>
            <person name="Grimwood J."/>
            <person name="Laplaza J.M."/>
            <person name="Aerts A."/>
            <person name="Salamov A."/>
            <person name="Schmutz J."/>
            <person name="Lindquist E."/>
            <person name="Dehal P."/>
            <person name="Shapiro H."/>
            <person name="Jin Y.-S."/>
            <person name="Passoth V."/>
            <person name="Richardson P.M."/>
        </authorList>
    </citation>
    <scope>NUCLEOTIDE SEQUENCE [LARGE SCALE GENOMIC DNA]</scope>
    <source>
        <strain>ATCC 58785 / CBS 6054 / NBRC 10063 / NRRL Y-11545</strain>
    </source>
</reference>
<protein>
    <recommendedName>
        <fullName evidence="1">Structure-specific endonuclease subunit SLX4</fullName>
    </recommendedName>
</protein>
<dbReference type="EMBL" id="AAVQ01000001">
    <property type="protein sequence ID" value="EAZ63521.2"/>
    <property type="molecule type" value="Genomic_DNA"/>
</dbReference>
<dbReference type="RefSeq" id="XP_001387544.2">
    <property type="nucleotide sequence ID" value="XM_001387507.1"/>
</dbReference>
<dbReference type="SMR" id="A3GGG8"/>
<dbReference type="GeneID" id="4851367"/>
<dbReference type="KEGG" id="pic:PICST_28599"/>
<dbReference type="eggNOG" id="ENOG502RS18">
    <property type="taxonomic scope" value="Eukaryota"/>
</dbReference>
<dbReference type="HOGENOM" id="CLU_429039_0_0_1"/>
<dbReference type="InParanoid" id="A3GGG8"/>
<dbReference type="OMA" id="CKEPAND"/>
<dbReference type="OrthoDB" id="5349119at2759"/>
<dbReference type="Proteomes" id="UP000002258">
    <property type="component" value="Chromosome 1"/>
</dbReference>
<dbReference type="GO" id="GO:0033557">
    <property type="term" value="C:Slx1-Slx4 complex"/>
    <property type="evidence" value="ECO:0007669"/>
    <property type="project" value="UniProtKB-UniRule"/>
</dbReference>
<dbReference type="GO" id="GO:0017108">
    <property type="term" value="F:5'-flap endonuclease activity"/>
    <property type="evidence" value="ECO:0007669"/>
    <property type="project" value="InterPro"/>
</dbReference>
<dbReference type="GO" id="GO:0006310">
    <property type="term" value="P:DNA recombination"/>
    <property type="evidence" value="ECO:0007669"/>
    <property type="project" value="UniProtKB-UniRule"/>
</dbReference>
<dbReference type="GO" id="GO:0006281">
    <property type="term" value="P:DNA repair"/>
    <property type="evidence" value="ECO:0007669"/>
    <property type="project" value="UniProtKB-UniRule"/>
</dbReference>
<dbReference type="GO" id="GO:0006260">
    <property type="term" value="P:DNA replication"/>
    <property type="evidence" value="ECO:0007669"/>
    <property type="project" value="InterPro"/>
</dbReference>
<dbReference type="HAMAP" id="MF_03110">
    <property type="entry name" value="Endonuc_su_Slx4"/>
    <property type="match status" value="1"/>
</dbReference>
<dbReference type="InterPro" id="IPR027784">
    <property type="entry name" value="Slx4_ascomycetes"/>
</dbReference>
<dbReference type="InterPro" id="IPR018574">
    <property type="entry name" value="Structure-sp_endonuc_su_Slx4"/>
</dbReference>
<dbReference type="Pfam" id="PF09494">
    <property type="entry name" value="Slx4"/>
    <property type="match status" value="1"/>
</dbReference>
<comment type="function">
    <text evidence="1">Regulatory subunit of the SLX1-SLX4 structure-specific endonuclease that resolves DNA secondary structures generated during DNA repair and recombination. Has endonuclease activity towards branched DNA substrates, introducing single-strand cuts in duplex DNA close to junctions with ss-DNA.</text>
</comment>
<comment type="subunit">
    <text evidence="1">Forms a heterodimer with SLX1.</text>
</comment>
<comment type="subcellular location">
    <subcellularLocation>
        <location evidence="1">Nucleus</location>
    </subcellularLocation>
</comment>
<comment type="PTM">
    <text evidence="1">Phosphorylated in response to DNA damage.</text>
</comment>
<comment type="similarity">
    <text evidence="1">Belongs to the SLX4 family.</text>
</comment>
<evidence type="ECO:0000255" key="1">
    <source>
        <dbReference type="HAMAP-Rule" id="MF_03110"/>
    </source>
</evidence>
<evidence type="ECO:0000256" key="2">
    <source>
        <dbReference type="SAM" id="MobiDB-lite"/>
    </source>
</evidence>
<sequence length="782" mass="88506">MVDSESQNDFANDGDNDSYFVSTQFESKQEEIMEKELQKLQTGQTVSQLLRFRSGISGLTSVTPKPVKVSRPGLRKTGSRKSKKNQSMSAMVKERFKTDKYAYFSGDQRKIDEFLRRLEGSEDIENMAMSTSGKDGSCLFTRDEWICIVQSIKLRFPELSTTKKKSLSAITRQINKQEKENEDENSIWSQARSLPSLELTDEDLKWLYDLDDEQMANRTITSSMTEVDGNDDHSPFVMTLSQTTPSQLSHIKESDSLYSQETNVQTTEPADHQSGHMQRCHSQTAEGKTQSKILEIEIVSDSEEEIESLIRNTEPDSSEDVYGANEVSSHQVPAVDALASFQSFPFAADMIPRNNVRDKEHESLHISSSIRSSPAQSLTQSQVPSSIDSIIEPPCESPRKMSPIRDTQPEPVITSPFKTPTKKSKELLSKYSSPVKNSIHNNMGSPVAMMVPRSSESAKHVEEIIVSSDEESVYSTAKSVFPSAQIVISEVEDEDEEFYEIVSSIPEKHKPTAAAKKRKLLQTSRYEVVSNFNINDYDDDQRGFKLRKLETKPIIIDSDNEIADSEEDEKNLSIIEITREVEAEESEHDTEYLINLGKQVEGNSKMNTSVLQVPSSPSSITFGRTDILKELEAFSNSDLDTDRTINSNTSKNSNAIKSGTNQTIDFTLLSTKELQERFKKWELKPVQGRQRMVSVLSEVSKLFTNSFNDPVPETRQGFEGTVYGSLNRLVGSNQYWHEKIISFEPLRVSELRDWICTKGYELEEDFLMRYCDDNGYCCTRQP</sequence>
<organism>
    <name type="scientific">Scheffersomyces stipitis (strain ATCC 58785 / CBS 6054 / NBRC 10063 / NRRL Y-11545)</name>
    <name type="common">Yeast</name>
    <name type="synonym">Pichia stipitis</name>
    <dbReference type="NCBI Taxonomy" id="322104"/>
    <lineage>
        <taxon>Eukaryota</taxon>
        <taxon>Fungi</taxon>
        <taxon>Dikarya</taxon>
        <taxon>Ascomycota</taxon>
        <taxon>Saccharomycotina</taxon>
        <taxon>Pichiomycetes</taxon>
        <taxon>Debaryomycetaceae</taxon>
        <taxon>Scheffersomyces</taxon>
    </lineage>
</organism>
<keyword id="KW-0227">DNA damage</keyword>
<keyword id="KW-0233">DNA recombination</keyword>
<keyword id="KW-0234">DNA repair</keyword>
<keyword id="KW-0539">Nucleus</keyword>
<keyword id="KW-0597">Phosphoprotein</keyword>
<keyword id="KW-1185">Reference proteome</keyword>
<accession>A3GGG8</accession>
<gene>
    <name evidence="1" type="primary">SLX4</name>
    <name type="ORF">PICST_28599</name>
</gene>
<feature type="chain" id="PRO_0000388043" description="Structure-specific endonuclease subunit SLX4">
    <location>
        <begin position="1"/>
        <end position="782"/>
    </location>
</feature>
<feature type="region of interest" description="Disordered" evidence="2">
    <location>
        <begin position="63"/>
        <end position="91"/>
    </location>
</feature>
<feature type="region of interest" description="Disordered" evidence="2">
    <location>
        <begin position="359"/>
        <end position="425"/>
    </location>
</feature>
<feature type="compositionally biased region" description="Basic residues" evidence="2">
    <location>
        <begin position="73"/>
        <end position="84"/>
    </location>
</feature>
<feature type="compositionally biased region" description="Polar residues" evidence="2">
    <location>
        <begin position="374"/>
        <end position="388"/>
    </location>
</feature>
<proteinExistence type="inferred from homology"/>
<name>SLX4_PICST</name>